<feature type="chain" id="PRO_1000011636" description="GTPase Der">
    <location>
        <begin position="1"/>
        <end position="462"/>
    </location>
</feature>
<feature type="domain" description="EngA-type G 1">
    <location>
        <begin position="9"/>
        <end position="171"/>
    </location>
</feature>
<feature type="domain" description="EngA-type G 2">
    <location>
        <begin position="201"/>
        <end position="372"/>
    </location>
</feature>
<feature type="domain" description="KH-like" evidence="1">
    <location>
        <begin position="373"/>
        <end position="457"/>
    </location>
</feature>
<feature type="binding site" evidence="1">
    <location>
        <begin position="15"/>
        <end position="22"/>
    </location>
    <ligand>
        <name>GTP</name>
        <dbReference type="ChEBI" id="CHEBI:37565"/>
        <label>1</label>
    </ligand>
</feature>
<feature type="binding site" evidence="1">
    <location>
        <begin position="62"/>
        <end position="66"/>
    </location>
    <ligand>
        <name>GTP</name>
        <dbReference type="ChEBI" id="CHEBI:37565"/>
        <label>1</label>
    </ligand>
</feature>
<feature type="binding site" evidence="1">
    <location>
        <begin position="123"/>
        <end position="126"/>
    </location>
    <ligand>
        <name>GTP</name>
        <dbReference type="ChEBI" id="CHEBI:37565"/>
        <label>1</label>
    </ligand>
</feature>
<feature type="binding site" evidence="1">
    <location>
        <begin position="207"/>
        <end position="214"/>
    </location>
    <ligand>
        <name>GTP</name>
        <dbReference type="ChEBI" id="CHEBI:37565"/>
        <label>2</label>
    </ligand>
</feature>
<feature type="binding site" evidence="1">
    <location>
        <begin position="254"/>
        <end position="258"/>
    </location>
    <ligand>
        <name>GTP</name>
        <dbReference type="ChEBI" id="CHEBI:37565"/>
        <label>2</label>
    </ligand>
</feature>
<feature type="binding site" evidence="1">
    <location>
        <begin position="318"/>
        <end position="321"/>
    </location>
    <ligand>
        <name>GTP</name>
        <dbReference type="ChEBI" id="CHEBI:37565"/>
        <label>2</label>
    </ligand>
</feature>
<dbReference type="EMBL" id="AM260522">
    <property type="protein sequence ID" value="CAJ99959.1"/>
    <property type="molecule type" value="Genomic_DNA"/>
</dbReference>
<dbReference type="RefSeq" id="WP_011578066.1">
    <property type="nucleotide sequence ID" value="NC_008229.1"/>
</dbReference>
<dbReference type="SMR" id="Q17WL7"/>
<dbReference type="STRING" id="382638.Hac_1204"/>
<dbReference type="GeneID" id="31758550"/>
<dbReference type="KEGG" id="hac:Hac_1204"/>
<dbReference type="eggNOG" id="COG1160">
    <property type="taxonomic scope" value="Bacteria"/>
</dbReference>
<dbReference type="HOGENOM" id="CLU_016077_6_2_7"/>
<dbReference type="OrthoDB" id="9805918at2"/>
<dbReference type="BioCyc" id="HACI382638:HAC_RS05190-MONOMER"/>
<dbReference type="Proteomes" id="UP000000775">
    <property type="component" value="Chromosome"/>
</dbReference>
<dbReference type="GO" id="GO:0005525">
    <property type="term" value="F:GTP binding"/>
    <property type="evidence" value="ECO:0007669"/>
    <property type="project" value="UniProtKB-UniRule"/>
</dbReference>
<dbReference type="GO" id="GO:0043022">
    <property type="term" value="F:ribosome binding"/>
    <property type="evidence" value="ECO:0007669"/>
    <property type="project" value="TreeGrafter"/>
</dbReference>
<dbReference type="GO" id="GO:0042254">
    <property type="term" value="P:ribosome biogenesis"/>
    <property type="evidence" value="ECO:0007669"/>
    <property type="project" value="UniProtKB-KW"/>
</dbReference>
<dbReference type="CDD" id="cd01894">
    <property type="entry name" value="EngA1"/>
    <property type="match status" value="1"/>
</dbReference>
<dbReference type="CDD" id="cd01895">
    <property type="entry name" value="EngA2"/>
    <property type="match status" value="1"/>
</dbReference>
<dbReference type="FunFam" id="3.30.300.20:FF:000004">
    <property type="entry name" value="GTPase Der"/>
    <property type="match status" value="1"/>
</dbReference>
<dbReference type="FunFam" id="3.40.50.300:FF:000494">
    <property type="entry name" value="tRNA modification GTPase MnmE"/>
    <property type="match status" value="1"/>
</dbReference>
<dbReference type="Gene3D" id="3.30.300.20">
    <property type="match status" value="1"/>
</dbReference>
<dbReference type="Gene3D" id="3.40.50.300">
    <property type="entry name" value="P-loop containing nucleotide triphosphate hydrolases"/>
    <property type="match status" value="2"/>
</dbReference>
<dbReference type="HAMAP" id="MF_00195">
    <property type="entry name" value="GTPase_Der"/>
    <property type="match status" value="1"/>
</dbReference>
<dbReference type="InterPro" id="IPR031166">
    <property type="entry name" value="G_ENGA"/>
</dbReference>
<dbReference type="InterPro" id="IPR006073">
    <property type="entry name" value="GTP-bd"/>
</dbReference>
<dbReference type="InterPro" id="IPR016484">
    <property type="entry name" value="GTPase_Der"/>
</dbReference>
<dbReference type="InterPro" id="IPR032859">
    <property type="entry name" value="KH_dom-like"/>
</dbReference>
<dbReference type="InterPro" id="IPR015946">
    <property type="entry name" value="KH_dom-like_a/b"/>
</dbReference>
<dbReference type="InterPro" id="IPR027417">
    <property type="entry name" value="P-loop_NTPase"/>
</dbReference>
<dbReference type="InterPro" id="IPR005225">
    <property type="entry name" value="Small_GTP-bd"/>
</dbReference>
<dbReference type="NCBIfam" id="TIGR03594">
    <property type="entry name" value="GTPase_EngA"/>
    <property type="match status" value="1"/>
</dbReference>
<dbReference type="NCBIfam" id="TIGR00231">
    <property type="entry name" value="small_GTP"/>
    <property type="match status" value="2"/>
</dbReference>
<dbReference type="PANTHER" id="PTHR43834">
    <property type="entry name" value="GTPASE DER"/>
    <property type="match status" value="1"/>
</dbReference>
<dbReference type="PANTHER" id="PTHR43834:SF6">
    <property type="entry name" value="GTPASE DER"/>
    <property type="match status" value="1"/>
</dbReference>
<dbReference type="Pfam" id="PF14714">
    <property type="entry name" value="KH_dom-like"/>
    <property type="match status" value="1"/>
</dbReference>
<dbReference type="Pfam" id="PF01926">
    <property type="entry name" value="MMR_HSR1"/>
    <property type="match status" value="2"/>
</dbReference>
<dbReference type="PIRSF" id="PIRSF006485">
    <property type="entry name" value="GTP-binding_EngA"/>
    <property type="match status" value="1"/>
</dbReference>
<dbReference type="PRINTS" id="PR00326">
    <property type="entry name" value="GTP1OBG"/>
</dbReference>
<dbReference type="SUPFAM" id="SSF52540">
    <property type="entry name" value="P-loop containing nucleoside triphosphate hydrolases"/>
    <property type="match status" value="2"/>
</dbReference>
<dbReference type="PROSITE" id="PS51712">
    <property type="entry name" value="G_ENGA"/>
    <property type="match status" value="2"/>
</dbReference>
<name>DER_HELAH</name>
<reference key="1">
    <citation type="journal article" date="2006" name="PLoS Genet.">
        <title>Who ate whom? Adaptive Helicobacter genomic changes that accompanied a host jump from early humans to large felines.</title>
        <authorList>
            <person name="Eppinger M."/>
            <person name="Baar C."/>
            <person name="Linz B."/>
            <person name="Raddatz G."/>
            <person name="Lanz C."/>
            <person name="Keller H."/>
            <person name="Morelli G."/>
            <person name="Gressmann H."/>
            <person name="Achtman M."/>
            <person name="Schuster S.C."/>
        </authorList>
    </citation>
    <scope>NUCLEOTIDE SEQUENCE [LARGE SCALE GENOMIC DNA]</scope>
    <source>
        <strain>Sheeba</strain>
    </source>
</reference>
<accession>Q17WL7</accession>
<keyword id="KW-0342">GTP-binding</keyword>
<keyword id="KW-0547">Nucleotide-binding</keyword>
<keyword id="KW-0677">Repeat</keyword>
<keyword id="KW-0690">Ribosome biogenesis</keyword>
<comment type="function">
    <text evidence="1">GTPase that plays an essential role in the late steps of ribosome biogenesis.</text>
</comment>
<comment type="subunit">
    <text evidence="1">Associates with the 50S ribosomal subunit.</text>
</comment>
<comment type="similarity">
    <text evidence="1">Belongs to the TRAFAC class TrmE-Era-EngA-EngB-Septin-like GTPase superfamily. EngA (Der) GTPase family.</text>
</comment>
<evidence type="ECO:0000255" key="1">
    <source>
        <dbReference type="HAMAP-Rule" id="MF_00195"/>
    </source>
</evidence>
<organism>
    <name type="scientific">Helicobacter acinonychis (strain Sheeba)</name>
    <dbReference type="NCBI Taxonomy" id="382638"/>
    <lineage>
        <taxon>Bacteria</taxon>
        <taxon>Pseudomonadati</taxon>
        <taxon>Campylobacterota</taxon>
        <taxon>Epsilonproteobacteria</taxon>
        <taxon>Campylobacterales</taxon>
        <taxon>Helicobacteraceae</taxon>
        <taxon>Helicobacter</taxon>
    </lineage>
</organism>
<protein>
    <recommendedName>
        <fullName evidence="1">GTPase Der</fullName>
    </recommendedName>
    <alternativeName>
        <fullName evidence="1">GTP-binding protein EngA</fullName>
    </alternativeName>
</protein>
<sequence length="462" mass="51901">MNTSPRTLKTIAILGQPNVGKSSLFNRLAKERIAITSDFVGTTRDINKRKITLNGHEVELLDTGGMAKDAFLSKEIKAFNLKAAQMSDLILYVVDGKSIPSDEDIKLFREIFKINPNCFLVINKIDNDKEKERSYAFSSFGMPKSFNISVSHNRGISALIDAILDALGLTKIIEQDLDIDILESLETPNNTEDGNNEEEIIQVGIIGRVNVGKSSLLNVLTQKERSIVSSVAGTTIDPIDETILVKNQKICFVDTAGIRHKGKILGIEKYALERTQKALEKSHIALLVLDVSAPFVELDEKISSLADKHSLGIILILNKWDIRYAPYEEIMATLKRKFRFLEYAPVITTSCLKTRHIEEIKHKIIEVYECFSKRIPTSLLNSVISQATQKHPLPSDGGKLVKVYYATQFATKPPQISLVMNRPKALHFSYKRYLINTLRKEFNFLGTPLIINAKDKKSVQQN</sequence>
<gene>
    <name evidence="1" type="primary">der</name>
    <name type="synonym">engA</name>
    <name type="ordered locus">Hac_1204</name>
</gene>
<proteinExistence type="inferred from homology"/>